<proteinExistence type="predicted"/>
<name>YMOX_PARDE</name>
<protein>
    <recommendedName>
        <fullName>Uncharacterized protein in moxR 3'region</fullName>
    </recommendedName>
</protein>
<dbReference type="EMBL" id="M57684">
    <property type="status" value="NOT_ANNOTATED_CDS"/>
    <property type="molecule type" value="Genomic_DNA"/>
</dbReference>
<dbReference type="PIR" id="E41377">
    <property type="entry name" value="E41377"/>
</dbReference>
<organism>
    <name type="scientific">Paracoccus denitrificans</name>
    <dbReference type="NCBI Taxonomy" id="266"/>
    <lineage>
        <taxon>Bacteria</taxon>
        <taxon>Pseudomonadati</taxon>
        <taxon>Pseudomonadota</taxon>
        <taxon>Alphaproteobacteria</taxon>
        <taxon>Rhodobacterales</taxon>
        <taxon>Paracoccaceae</taxon>
        <taxon>Paracoccus</taxon>
    </lineage>
</organism>
<accession>P29902</accession>
<reference key="1">
    <citation type="journal article" date="1991" name="J. Bacteriol.">
        <title>Isolation and characterization of the moxJ, moxG, moxI, and moxR genes of Paracoccus denitrificans: inactivation of moxJ, moxG, and moxR and the resultant effect on methylotrophic growth.</title>
        <authorList>
            <person name="van Spanning R.J.M."/>
            <person name="Wansell C.W."/>
            <person name="de Boer T."/>
            <person name="Hazelaar M.J."/>
            <person name="Anazawa H."/>
            <person name="Harms N."/>
            <person name="Oltmann L.F."/>
            <person name="Stouthamer A.H."/>
        </authorList>
    </citation>
    <scope>NUCLEOTIDE SEQUENCE [GENOMIC DNA]</scope>
</reference>
<sequence>MAHDLPQERILVVLISDFELSPDELAALLAALRPRPVLSVWLRDSGFDAPSPRLGLAELCDPETGRRRTVLTTPRWAARQAQLLRDRQAALRRILAEHGLSPIEI</sequence>
<feature type="chain" id="PRO_0000066313" description="Uncharacterized protein in moxR 3'region">
    <location>
        <begin position="1"/>
        <end position="105" status="greater than"/>
    </location>
</feature>
<feature type="non-terminal residue">
    <location>
        <position position="105"/>
    </location>
</feature>